<comment type="function">
    <text evidence="1">Required for maturation of 30S ribosomal subunits.</text>
</comment>
<comment type="subcellular location">
    <subcellularLocation>
        <location evidence="1">Cytoplasm</location>
    </subcellularLocation>
</comment>
<comment type="similarity">
    <text evidence="1">Belongs to the RimP family.</text>
</comment>
<feature type="chain" id="PRO_1000064722" description="Ribosome maturation factor RimP">
    <location>
        <begin position="1"/>
        <end position="158"/>
    </location>
</feature>
<proteinExistence type="inferred from homology"/>
<evidence type="ECO:0000255" key="1">
    <source>
        <dbReference type="HAMAP-Rule" id="MF_01077"/>
    </source>
</evidence>
<sequence length="158" mass="18251">MPKNLTPILEAIEPVIIGHDCELVDLEYVKEKSQDYLRIYVDKQPNGIDIETIAELSELVGEKLDSMQPDPLPDPYILELSSPGLERPIKKEQDWEKAKGQYIHVGLYQKLEGEKVFEGHLLDLDDQEIKLEIKIKTRRKQLTIPRKQIASARFAIEF</sequence>
<organism>
    <name type="scientific">Lactobacillus delbrueckii subsp. bulgaricus (strain ATCC 11842 / DSM 20081 / BCRC 10696 / JCM 1002 / NBRC 13953 / NCIMB 11778 / NCTC 12712 / WDCM 00102 / Lb 14)</name>
    <dbReference type="NCBI Taxonomy" id="390333"/>
    <lineage>
        <taxon>Bacteria</taxon>
        <taxon>Bacillati</taxon>
        <taxon>Bacillota</taxon>
        <taxon>Bacilli</taxon>
        <taxon>Lactobacillales</taxon>
        <taxon>Lactobacillaceae</taxon>
        <taxon>Lactobacillus</taxon>
    </lineage>
</organism>
<accession>Q1G9P5</accession>
<name>RIMP_LACDA</name>
<gene>
    <name evidence="1" type="primary">rimP</name>
    <name type="ordered locus">Ldb1336</name>
</gene>
<reference key="1">
    <citation type="journal article" date="2006" name="Proc. Natl. Acad. Sci. U.S.A.">
        <title>The complete genome sequence of Lactobacillus bulgaricus reveals extensive and ongoing reductive evolution.</title>
        <authorList>
            <person name="van de Guchte M."/>
            <person name="Penaud S."/>
            <person name="Grimaldi C."/>
            <person name="Barbe V."/>
            <person name="Bryson K."/>
            <person name="Nicolas P."/>
            <person name="Robert C."/>
            <person name="Oztas S."/>
            <person name="Mangenot S."/>
            <person name="Couloux A."/>
            <person name="Loux V."/>
            <person name="Dervyn R."/>
            <person name="Bossy R."/>
            <person name="Bolotin A."/>
            <person name="Batto J.-M."/>
            <person name="Walunas T."/>
            <person name="Gibrat J.-F."/>
            <person name="Bessieres P."/>
            <person name="Weissenbach J."/>
            <person name="Ehrlich S.D."/>
            <person name="Maguin E."/>
        </authorList>
    </citation>
    <scope>NUCLEOTIDE SEQUENCE [LARGE SCALE GENOMIC DNA]</scope>
    <source>
        <strain>ATCC 11842 / DSM 20081 / BCRC 10696 / JCM 1002 / NBRC 13953 / NCIMB 11778 / NCTC 12712 / WDCM 00102 / Lb 14</strain>
    </source>
</reference>
<protein>
    <recommendedName>
        <fullName evidence="1">Ribosome maturation factor RimP</fullName>
    </recommendedName>
</protein>
<keyword id="KW-0963">Cytoplasm</keyword>
<keyword id="KW-1185">Reference proteome</keyword>
<keyword id="KW-0690">Ribosome biogenesis</keyword>
<dbReference type="EMBL" id="CR954253">
    <property type="protein sequence ID" value="CAI98137.1"/>
    <property type="molecule type" value="Genomic_DNA"/>
</dbReference>
<dbReference type="RefSeq" id="WP_011544003.1">
    <property type="nucleotide sequence ID" value="NZ_JQAV01000006.1"/>
</dbReference>
<dbReference type="SMR" id="Q1G9P5"/>
<dbReference type="STRING" id="390333.Ldb1336"/>
<dbReference type="KEGG" id="ldb:Ldb1336"/>
<dbReference type="eggNOG" id="COG0779">
    <property type="taxonomic scope" value="Bacteria"/>
</dbReference>
<dbReference type="HOGENOM" id="CLU_070525_2_0_9"/>
<dbReference type="BioCyc" id="LDEL390333:LDB_RS05715-MONOMER"/>
<dbReference type="Proteomes" id="UP000001259">
    <property type="component" value="Chromosome"/>
</dbReference>
<dbReference type="GO" id="GO:0005829">
    <property type="term" value="C:cytosol"/>
    <property type="evidence" value="ECO:0007669"/>
    <property type="project" value="TreeGrafter"/>
</dbReference>
<dbReference type="GO" id="GO:0000028">
    <property type="term" value="P:ribosomal small subunit assembly"/>
    <property type="evidence" value="ECO:0007669"/>
    <property type="project" value="TreeGrafter"/>
</dbReference>
<dbReference type="GO" id="GO:0006412">
    <property type="term" value="P:translation"/>
    <property type="evidence" value="ECO:0007669"/>
    <property type="project" value="TreeGrafter"/>
</dbReference>
<dbReference type="CDD" id="cd01734">
    <property type="entry name" value="YlxS_C"/>
    <property type="match status" value="1"/>
</dbReference>
<dbReference type="Gene3D" id="2.30.30.180">
    <property type="entry name" value="Ribosome maturation factor RimP, C-terminal domain"/>
    <property type="match status" value="1"/>
</dbReference>
<dbReference type="Gene3D" id="3.30.300.70">
    <property type="entry name" value="RimP-like superfamily, N-terminal"/>
    <property type="match status" value="1"/>
</dbReference>
<dbReference type="HAMAP" id="MF_01077">
    <property type="entry name" value="RimP"/>
    <property type="match status" value="1"/>
</dbReference>
<dbReference type="InterPro" id="IPR003728">
    <property type="entry name" value="Ribosome_maturation_RimP"/>
</dbReference>
<dbReference type="InterPro" id="IPR028998">
    <property type="entry name" value="RimP_C"/>
</dbReference>
<dbReference type="InterPro" id="IPR036847">
    <property type="entry name" value="RimP_C_sf"/>
</dbReference>
<dbReference type="InterPro" id="IPR028989">
    <property type="entry name" value="RimP_N"/>
</dbReference>
<dbReference type="InterPro" id="IPR035956">
    <property type="entry name" value="RimP_N_sf"/>
</dbReference>
<dbReference type="NCBIfam" id="NF000928">
    <property type="entry name" value="PRK00092.1-2"/>
    <property type="match status" value="1"/>
</dbReference>
<dbReference type="PANTHER" id="PTHR33867">
    <property type="entry name" value="RIBOSOME MATURATION FACTOR RIMP"/>
    <property type="match status" value="1"/>
</dbReference>
<dbReference type="PANTHER" id="PTHR33867:SF1">
    <property type="entry name" value="RIBOSOME MATURATION FACTOR RIMP"/>
    <property type="match status" value="1"/>
</dbReference>
<dbReference type="Pfam" id="PF17384">
    <property type="entry name" value="DUF150_C"/>
    <property type="match status" value="1"/>
</dbReference>
<dbReference type="Pfam" id="PF02576">
    <property type="entry name" value="RimP_N"/>
    <property type="match status" value="1"/>
</dbReference>
<dbReference type="SUPFAM" id="SSF74942">
    <property type="entry name" value="YhbC-like, C-terminal domain"/>
    <property type="match status" value="1"/>
</dbReference>
<dbReference type="SUPFAM" id="SSF75420">
    <property type="entry name" value="YhbC-like, N-terminal domain"/>
    <property type="match status" value="1"/>
</dbReference>